<protein>
    <recommendedName>
        <fullName evidence="2">Elongation factor Tu</fullName>
        <shortName evidence="2">EF-Tu</shortName>
        <ecNumber evidence="2">3.6.5.3</ecNumber>
    </recommendedName>
</protein>
<reference key="1">
    <citation type="submission" date="2006-03" db="EMBL/GenBank/DDBJ databases">
        <title>Complete sequence of Shewanella denitrificans OS217.</title>
        <authorList>
            <consortium name="US DOE Joint Genome Institute"/>
            <person name="Copeland A."/>
            <person name="Lucas S."/>
            <person name="Lapidus A."/>
            <person name="Barry K."/>
            <person name="Detter J.C."/>
            <person name="Glavina del Rio T."/>
            <person name="Hammon N."/>
            <person name="Israni S."/>
            <person name="Dalin E."/>
            <person name="Tice H."/>
            <person name="Pitluck S."/>
            <person name="Brettin T."/>
            <person name="Bruce D."/>
            <person name="Han C."/>
            <person name="Tapia R."/>
            <person name="Gilna P."/>
            <person name="Kiss H."/>
            <person name="Schmutz J."/>
            <person name="Larimer F."/>
            <person name="Land M."/>
            <person name="Hauser L."/>
            <person name="Kyrpides N."/>
            <person name="Lykidis A."/>
            <person name="Richardson P."/>
        </authorList>
    </citation>
    <scope>NUCLEOTIDE SEQUENCE [LARGE SCALE GENOMIC DNA]</scope>
    <source>
        <strain>OS217 / ATCC BAA-1090 / DSM 15013</strain>
    </source>
</reference>
<proteinExistence type="inferred from homology"/>
<sequence length="394" mass="43368">MAKAKFERKKPHVNVGTIGHVDHGKTTLTAAISAVLSKTYGGEVRNFAQIDNAPEERERGITINTSHIEYDTPSRHYAHVDCPGHADYVKNMITGAAQMDGAILVVAATDGPMPQTREHILLSRQVGVPFIIVFMNKCDMVDDEELLELVEMEVRELLSEYDFPGDDLPVIQGSALKALEGQPEWEAKILELAEALDTYIPEPERDIDKPFLLPIEDVFSISGRGTVVTGRVERGIVRVGDEVEIVGVKATTKTTCTGVEMFRKLLDEGRAGENCGVLLRGTKRDDVERGQVLAKPASINPHTTFESEVYVLSKEEGGRHTPFFKGYRPQFYFRTTDVTGTIELPEGVEMVMPGDNIKMVVTLIYPIAMDDGLRFAIREGGRTVGAGVVAKIIA</sequence>
<name>EFTU_SHEDO</name>
<organism>
    <name type="scientific">Shewanella denitrificans (strain OS217 / ATCC BAA-1090 / DSM 15013)</name>
    <dbReference type="NCBI Taxonomy" id="318161"/>
    <lineage>
        <taxon>Bacteria</taxon>
        <taxon>Pseudomonadati</taxon>
        <taxon>Pseudomonadota</taxon>
        <taxon>Gammaproteobacteria</taxon>
        <taxon>Alteromonadales</taxon>
        <taxon>Shewanellaceae</taxon>
        <taxon>Shewanella</taxon>
    </lineage>
</organism>
<keyword id="KW-0963">Cytoplasm</keyword>
<keyword id="KW-0251">Elongation factor</keyword>
<keyword id="KW-0342">GTP-binding</keyword>
<keyword id="KW-0378">Hydrolase</keyword>
<keyword id="KW-0460">Magnesium</keyword>
<keyword id="KW-0479">Metal-binding</keyword>
<keyword id="KW-0547">Nucleotide-binding</keyword>
<keyword id="KW-0648">Protein biosynthesis</keyword>
<keyword id="KW-1185">Reference proteome</keyword>
<accession>Q12SW1</accession>
<evidence type="ECO:0000250" key="1"/>
<evidence type="ECO:0000255" key="2">
    <source>
        <dbReference type="HAMAP-Rule" id="MF_00118"/>
    </source>
</evidence>
<dbReference type="EC" id="3.6.5.3" evidence="2"/>
<dbReference type="EMBL" id="CP000302">
    <property type="protein sequence ID" value="ABE53465.1"/>
    <property type="molecule type" value="Genomic_DNA"/>
</dbReference>
<dbReference type="RefSeq" id="WP_011494634.1">
    <property type="nucleotide sequence ID" value="NC_007954.1"/>
</dbReference>
<dbReference type="SMR" id="Q12SW1"/>
<dbReference type="STRING" id="318161.Sden_0168"/>
<dbReference type="KEGG" id="sdn:Sden_0168"/>
<dbReference type="eggNOG" id="COG0050">
    <property type="taxonomic scope" value="Bacteria"/>
</dbReference>
<dbReference type="HOGENOM" id="CLU_007265_0_2_6"/>
<dbReference type="OrthoDB" id="9803139at2"/>
<dbReference type="Proteomes" id="UP000001982">
    <property type="component" value="Chromosome"/>
</dbReference>
<dbReference type="GO" id="GO:0005829">
    <property type="term" value="C:cytosol"/>
    <property type="evidence" value="ECO:0007669"/>
    <property type="project" value="TreeGrafter"/>
</dbReference>
<dbReference type="GO" id="GO:0005525">
    <property type="term" value="F:GTP binding"/>
    <property type="evidence" value="ECO:0007669"/>
    <property type="project" value="UniProtKB-UniRule"/>
</dbReference>
<dbReference type="GO" id="GO:0003924">
    <property type="term" value="F:GTPase activity"/>
    <property type="evidence" value="ECO:0007669"/>
    <property type="project" value="InterPro"/>
</dbReference>
<dbReference type="GO" id="GO:0097216">
    <property type="term" value="F:guanosine tetraphosphate binding"/>
    <property type="evidence" value="ECO:0007669"/>
    <property type="project" value="UniProtKB-ARBA"/>
</dbReference>
<dbReference type="GO" id="GO:0003746">
    <property type="term" value="F:translation elongation factor activity"/>
    <property type="evidence" value="ECO:0007669"/>
    <property type="project" value="UniProtKB-UniRule"/>
</dbReference>
<dbReference type="CDD" id="cd01884">
    <property type="entry name" value="EF_Tu"/>
    <property type="match status" value="1"/>
</dbReference>
<dbReference type="CDD" id="cd03697">
    <property type="entry name" value="EFTU_II"/>
    <property type="match status" value="1"/>
</dbReference>
<dbReference type="CDD" id="cd03707">
    <property type="entry name" value="EFTU_III"/>
    <property type="match status" value="1"/>
</dbReference>
<dbReference type="FunFam" id="2.40.30.10:FF:000001">
    <property type="entry name" value="Elongation factor Tu"/>
    <property type="match status" value="1"/>
</dbReference>
<dbReference type="FunFam" id="3.40.50.300:FF:000003">
    <property type="entry name" value="Elongation factor Tu"/>
    <property type="match status" value="1"/>
</dbReference>
<dbReference type="Gene3D" id="3.40.50.300">
    <property type="entry name" value="P-loop containing nucleotide triphosphate hydrolases"/>
    <property type="match status" value="1"/>
</dbReference>
<dbReference type="Gene3D" id="2.40.30.10">
    <property type="entry name" value="Translation factors"/>
    <property type="match status" value="2"/>
</dbReference>
<dbReference type="HAMAP" id="MF_00118_B">
    <property type="entry name" value="EF_Tu_B"/>
    <property type="match status" value="1"/>
</dbReference>
<dbReference type="InterPro" id="IPR041709">
    <property type="entry name" value="EF-Tu_GTP-bd"/>
</dbReference>
<dbReference type="InterPro" id="IPR050055">
    <property type="entry name" value="EF-Tu_GTPase"/>
</dbReference>
<dbReference type="InterPro" id="IPR004161">
    <property type="entry name" value="EFTu-like_2"/>
</dbReference>
<dbReference type="InterPro" id="IPR033720">
    <property type="entry name" value="EFTU_2"/>
</dbReference>
<dbReference type="InterPro" id="IPR031157">
    <property type="entry name" value="G_TR_CS"/>
</dbReference>
<dbReference type="InterPro" id="IPR027417">
    <property type="entry name" value="P-loop_NTPase"/>
</dbReference>
<dbReference type="InterPro" id="IPR005225">
    <property type="entry name" value="Small_GTP-bd"/>
</dbReference>
<dbReference type="InterPro" id="IPR000795">
    <property type="entry name" value="T_Tr_GTP-bd_dom"/>
</dbReference>
<dbReference type="InterPro" id="IPR009000">
    <property type="entry name" value="Transl_B-barrel_sf"/>
</dbReference>
<dbReference type="InterPro" id="IPR009001">
    <property type="entry name" value="Transl_elong_EF1A/Init_IF2_C"/>
</dbReference>
<dbReference type="InterPro" id="IPR004541">
    <property type="entry name" value="Transl_elong_EFTu/EF1A_bac/org"/>
</dbReference>
<dbReference type="InterPro" id="IPR004160">
    <property type="entry name" value="Transl_elong_EFTu/EF1A_C"/>
</dbReference>
<dbReference type="NCBIfam" id="TIGR00485">
    <property type="entry name" value="EF-Tu"/>
    <property type="match status" value="1"/>
</dbReference>
<dbReference type="NCBIfam" id="NF000766">
    <property type="entry name" value="PRK00049.1"/>
    <property type="match status" value="1"/>
</dbReference>
<dbReference type="NCBIfam" id="NF009372">
    <property type="entry name" value="PRK12735.1"/>
    <property type="match status" value="1"/>
</dbReference>
<dbReference type="NCBIfam" id="NF009373">
    <property type="entry name" value="PRK12736.1"/>
    <property type="match status" value="1"/>
</dbReference>
<dbReference type="NCBIfam" id="TIGR00231">
    <property type="entry name" value="small_GTP"/>
    <property type="match status" value="1"/>
</dbReference>
<dbReference type="PANTHER" id="PTHR43721:SF22">
    <property type="entry name" value="ELONGATION FACTOR TU, MITOCHONDRIAL"/>
    <property type="match status" value="1"/>
</dbReference>
<dbReference type="PANTHER" id="PTHR43721">
    <property type="entry name" value="ELONGATION FACTOR TU-RELATED"/>
    <property type="match status" value="1"/>
</dbReference>
<dbReference type="Pfam" id="PF00009">
    <property type="entry name" value="GTP_EFTU"/>
    <property type="match status" value="1"/>
</dbReference>
<dbReference type="Pfam" id="PF03144">
    <property type="entry name" value="GTP_EFTU_D2"/>
    <property type="match status" value="1"/>
</dbReference>
<dbReference type="Pfam" id="PF03143">
    <property type="entry name" value="GTP_EFTU_D3"/>
    <property type="match status" value="1"/>
</dbReference>
<dbReference type="PRINTS" id="PR00315">
    <property type="entry name" value="ELONGATNFCT"/>
</dbReference>
<dbReference type="SUPFAM" id="SSF50465">
    <property type="entry name" value="EF-Tu/eEF-1alpha/eIF2-gamma C-terminal domain"/>
    <property type="match status" value="1"/>
</dbReference>
<dbReference type="SUPFAM" id="SSF52540">
    <property type="entry name" value="P-loop containing nucleoside triphosphate hydrolases"/>
    <property type="match status" value="1"/>
</dbReference>
<dbReference type="SUPFAM" id="SSF50447">
    <property type="entry name" value="Translation proteins"/>
    <property type="match status" value="1"/>
</dbReference>
<dbReference type="PROSITE" id="PS00301">
    <property type="entry name" value="G_TR_1"/>
    <property type="match status" value="1"/>
</dbReference>
<dbReference type="PROSITE" id="PS51722">
    <property type="entry name" value="G_TR_2"/>
    <property type="match status" value="1"/>
</dbReference>
<gene>
    <name evidence="2" type="primary">tuf</name>
    <name type="ordered locus">Sden_0168</name>
</gene>
<comment type="function">
    <text evidence="2">GTP hydrolase that promotes the GTP-dependent binding of aminoacyl-tRNA to the A-site of ribosomes during protein biosynthesis.</text>
</comment>
<comment type="catalytic activity">
    <reaction evidence="2">
        <text>GTP + H2O = GDP + phosphate + H(+)</text>
        <dbReference type="Rhea" id="RHEA:19669"/>
        <dbReference type="ChEBI" id="CHEBI:15377"/>
        <dbReference type="ChEBI" id="CHEBI:15378"/>
        <dbReference type="ChEBI" id="CHEBI:37565"/>
        <dbReference type="ChEBI" id="CHEBI:43474"/>
        <dbReference type="ChEBI" id="CHEBI:58189"/>
        <dbReference type="EC" id="3.6.5.3"/>
    </reaction>
    <physiologicalReaction direction="left-to-right" evidence="2">
        <dbReference type="Rhea" id="RHEA:19670"/>
    </physiologicalReaction>
</comment>
<comment type="subunit">
    <text evidence="2">Monomer.</text>
</comment>
<comment type="subcellular location">
    <subcellularLocation>
        <location evidence="2">Cytoplasm</location>
    </subcellularLocation>
</comment>
<comment type="similarity">
    <text evidence="2">Belongs to the TRAFAC class translation factor GTPase superfamily. Classic translation factor GTPase family. EF-Tu/EF-1A subfamily.</text>
</comment>
<feature type="chain" id="PRO_1000015745" description="Elongation factor Tu">
    <location>
        <begin position="1"/>
        <end position="394"/>
    </location>
</feature>
<feature type="domain" description="tr-type G">
    <location>
        <begin position="10"/>
        <end position="204"/>
    </location>
</feature>
<feature type="region of interest" description="G1" evidence="1">
    <location>
        <begin position="19"/>
        <end position="26"/>
    </location>
</feature>
<feature type="region of interest" description="G2" evidence="1">
    <location>
        <begin position="60"/>
        <end position="64"/>
    </location>
</feature>
<feature type="region of interest" description="G3" evidence="1">
    <location>
        <begin position="81"/>
        <end position="84"/>
    </location>
</feature>
<feature type="region of interest" description="G4" evidence="1">
    <location>
        <begin position="136"/>
        <end position="139"/>
    </location>
</feature>
<feature type="region of interest" description="G5" evidence="1">
    <location>
        <begin position="174"/>
        <end position="176"/>
    </location>
</feature>
<feature type="binding site" evidence="2">
    <location>
        <begin position="19"/>
        <end position="26"/>
    </location>
    <ligand>
        <name>GTP</name>
        <dbReference type="ChEBI" id="CHEBI:37565"/>
    </ligand>
</feature>
<feature type="binding site" evidence="2">
    <location>
        <position position="26"/>
    </location>
    <ligand>
        <name>Mg(2+)</name>
        <dbReference type="ChEBI" id="CHEBI:18420"/>
    </ligand>
</feature>
<feature type="binding site" evidence="2">
    <location>
        <begin position="81"/>
        <end position="85"/>
    </location>
    <ligand>
        <name>GTP</name>
        <dbReference type="ChEBI" id="CHEBI:37565"/>
    </ligand>
</feature>
<feature type="binding site" evidence="2">
    <location>
        <begin position="136"/>
        <end position="139"/>
    </location>
    <ligand>
        <name>GTP</name>
        <dbReference type="ChEBI" id="CHEBI:37565"/>
    </ligand>
</feature>